<feature type="chain" id="PRO_1000064316" description="Protein PsiE homolog">
    <location>
        <begin position="1"/>
        <end position="136"/>
    </location>
</feature>
<feature type="transmembrane region" description="Helical" evidence="1">
    <location>
        <begin position="15"/>
        <end position="35"/>
    </location>
</feature>
<feature type="transmembrane region" description="Helical" evidence="1">
    <location>
        <begin position="58"/>
        <end position="78"/>
    </location>
</feature>
<feature type="transmembrane region" description="Helical" evidence="1">
    <location>
        <begin position="82"/>
        <end position="102"/>
    </location>
</feature>
<feature type="transmembrane region" description="Helical" evidence="1">
    <location>
        <begin position="108"/>
        <end position="128"/>
    </location>
</feature>
<gene>
    <name evidence="1" type="primary">psiE</name>
    <name type="ordered locus">KPN78578_43510</name>
    <name type="ORF">KPN_04420</name>
</gene>
<dbReference type="EMBL" id="CP000647">
    <property type="protein sequence ID" value="ABR79775.1"/>
    <property type="molecule type" value="Genomic_DNA"/>
</dbReference>
<dbReference type="RefSeq" id="WP_002884721.1">
    <property type="nucleotide sequence ID" value="NC_009648.1"/>
</dbReference>
<dbReference type="SMR" id="A6TGU1"/>
<dbReference type="STRING" id="272620.KPN_04420"/>
<dbReference type="PaxDb" id="272620-KPN_04420"/>
<dbReference type="EnsemblBacteria" id="ABR79775">
    <property type="protein sequence ID" value="ABR79775"/>
    <property type="gene ID" value="KPN_04420"/>
</dbReference>
<dbReference type="KEGG" id="kpn:KPN_04420"/>
<dbReference type="HOGENOM" id="CLU_127561_0_1_6"/>
<dbReference type="Proteomes" id="UP000000265">
    <property type="component" value="Chromosome"/>
</dbReference>
<dbReference type="GO" id="GO:0005886">
    <property type="term" value="C:plasma membrane"/>
    <property type="evidence" value="ECO:0007669"/>
    <property type="project" value="UniProtKB-SubCell"/>
</dbReference>
<dbReference type="GO" id="GO:0016036">
    <property type="term" value="P:cellular response to phosphate starvation"/>
    <property type="evidence" value="ECO:0007669"/>
    <property type="project" value="InterPro"/>
</dbReference>
<dbReference type="HAMAP" id="MF_01048">
    <property type="entry name" value="PsiE"/>
    <property type="match status" value="1"/>
</dbReference>
<dbReference type="InterPro" id="IPR009315">
    <property type="entry name" value="P_starv_induced_PsiE"/>
</dbReference>
<dbReference type="InterPro" id="IPR020948">
    <property type="entry name" value="P_starv_induced_PsiE-like"/>
</dbReference>
<dbReference type="NCBIfam" id="NF002765">
    <property type="entry name" value="PRK02833.1-3"/>
    <property type="match status" value="1"/>
</dbReference>
<dbReference type="NCBIfam" id="NF002767">
    <property type="entry name" value="PRK02833.1-5"/>
    <property type="match status" value="1"/>
</dbReference>
<dbReference type="PANTHER" id="PTHR37819">
    <property type="entry name" value="PROTEIN PSIE"/>
    <property type="match status" value="1"/>
</dbReference>
<dbReference type="PANTHER" id="PTHR37819:SF1">
    <property type="entry name" value="PROTEIN PSIE"/>
    <property type="match status" value="1"/>
</dbReference>
<dbReference type="Pfam" id="PF06146">
    <property type="entry name" value="PsiE"/>
    <property type="match status" value="1"/>
</dbReference>
<dbReference type="PIRSF" id="PIRSF029598">
    <property type="entry name" value="PsiE"/>
    <property type="match status" value="1"/>
</dbReference>
<accession>A6TGU1</accession>
<organism>
    <name type="scientific">Klebsiella pneumoniae subsp. pneumoniae (strain ATCC 700721 / MGH 78578)</name>
    <dbReference type="NCBI Taxonomy" id="272620"/>
    <lineage>
        <taxon>Bacteria</taxon>
        <taxon>Pseudomonadati</taxon>
        <taxon>Pseudomonadota</taxon>
        <taxon>Gammaproteobacteria</taxon>
        <taxon>Enterobacterales</taxon>
        <taxon>Enterobacteriaceae</taxon>
        <taxon>Klebsiella/Raoultella group</taxon>
        <taxon>Klebsiella</taxon>
        <taxon>Klebsiella pneumoniae complex</taxon>
    </lineage>
</organism>
<comment type="subcellular location">
    <subcellularLocation>
        <location evidence="1">Cell inner membrane</location>
        <topology evidence="1">Multi-pass membrane protein</topology>
    </subcellularLocation>
</comment>
<comment type="similarity">
    <text evidence="1">Belongs to the PsiE family.</text>
</comment>
<sequence>MPSVYRPLVNFVAKAMQAVLNLALLCLGIILVVFLGKETLHLAHVLFTPEPVSKYKLVEGLVVYFLYFEFIALIVKYFESGFHFPLRYFVYIGITAIVRLIIVDHESPLAVLIYSAAILILVITLWLCNSNRLKRE</sequence>
<reference key="1">
    <citation type="submission" date="2006-09" db="EMBL/GenBank/DDBJ databases">
        <authorList>
            <consortium name="The Klebsiella pneumonia Genome Sequencing Project"/>
            <person name="McClelland M."/>
            <person name="Sanderson E.K."/>
            <person name="Spieth J."/>
            <person name="Clifton W.S."/>
            <person name="Latreille P."/>
            <person name="Sabo A."/>
            <person name="Pepin K."/>
            <person name="Bhonagiri V."/>
            <person name="Porwollik S."/>
            <person name="Ali J."/>
            <person name="Wilson R.K."/>
        </authorList>
    </citation>
    <scope>NUCLEOTIDE SEQUENCE [LARGE SCALE GENOMIC DNA]</scope>
    <source>
        <strain>ATCC 700721 / MGH 78578</strain>
    </source>
</reference>
<name>PSIE_KLEP7</name>
<proteinExistence type="inferred from homology"/>
<protein>
    <recommendedName>
        <fullName evidence="1">Protein PsiE homolog</fullName>
    </recommendedName>
</protein>
<keyword id="KW-0997">Cell inner membrane</keyword>
<keyword id="KW-1003">Cell membrane</keyword>
<keyword id="KW-0472">Membrane</keyword>
<keyword id="KW-0812">Transmembrane</keyword>
<keyword id="KW-1133">Transmembrane helix</keyword>
<evidence type="ECO:0000255" key="1">
    <source>
        <dbReference type="HAMAP-Rule" id="MF_01048"/>
    </source>
</evidence>